<keyword id="KW-0067">ATP-binding</keyword>
<keyword id="KW-0170">Cobalt</keyword>
<keyword id="KW-0963">Cytoplasm</keyword>
<keyword id="KW-0460">Magnesium</keyword>
<keyword id="KW-0479">Metal-binding</keyword>
<keyword id="KW-0547">Nucleotide-binding</keyword>
<keyword id="KW-0554">One-carbon metabolism</keyword>
<keyword id="KW-0630">Potassium</keyword>
<keyword id="KW-1185">Reference proteome</keyword>
<keyword id="KW-0808">Transferase</keyword>
<feature type="chain" id="PRO_0000363032" description="S-adenosylmethionine synthase">
    <location>
        <begin position="1"/>
        <end position="387"/>
    </location>
</feature>
<feature type="binding site" evidence="3">
    <location>
        <position position="8"/>
    </location>
    <ligand>
        <name>Mg(2+)</name>
        <dbReference type="ChEBI" id="CHEBI:18420"/>
    </ligand>
</feature>
<feature type="binding site" description="in other chain" evidence="4">
    <location>
        <position position="14"/>
    </location>
    <ligand>
        <name>ATP</name>
        <dbReference type="ChEBI" id="CHEBI:30616"/>
        <note>ligand shared between two neighboring subunits</note>
    </ligand>
</feature>
<feature type="binding site" evidence="2">
    <location>
        <position position="42"/>
    </location>
    <ligand>
        <name>K(+)</name>
        <dbReference type="ChEBI" id="CHEBI:29103"/>
    </ligand>
</feature>
<feature type="binding site" description="in other chain" evidence="2">
    <location>
        <position position="55"/>
    </location>
    <ligand>
        <name>L-methionine</name>
        <dbReference type="ChEBI" id="CHEBI:57844"/>
        <note>ligand shared between two neighboring subunits</note>
    </ligand>
</feature>
<feature type="binding site" description="in other chain" evidence="2">
    <location>
        <position position="98"/>
    </location>
    <ligand>
        <name>L-methionine</name>
        <dbReference type="ChEBI" id="CHEBI:57844"/>
        <note>ligand shared between two neighboring subunits</note>
    </ligand>
</feature>
<feature type="binding site" description="in other chain" evidence="4">
    <location>
        <begin position="166"/>
        <end position="168"/>
    </location>
    <ligand>
        <name>ATP</name>
        <dbReference type="ChEBI" id="CHEBI:30616"/>
        <note>ligand shared between two neighboring subunits</note>
    </ligand>
</feature>
<feature type="binding site" description="in other chain" evidence="4">
    <location>
        <begin position="234"/>
        <end position="237"/>
    </location>
    <ligand>
        <name>ATP</name>
        <dbReference type="ChEBI" id="CHEBI:30616"/>
        <note>ligand shared between two neighboring subunits</note>
    </ligand>
</feature>
<feature type="binding site" description="in other chain" evidence="4">
    <location>
        <position position="245"/>
    </location>
    <ligand>
        <name>ATP</name>
        <dbReference type="ChEBI" id="CHEBI:30616"/>
        <note>ligand shared between two neighboring subunits</note>
    </ligand>
</feature>
<feature type="binding site" evidence="2">
    <location>
        <position position="245"/>
    </location>
    <ligand>
        <name>L-methionine</name>
        <dbReference type="ChEBI" id="CHEBI:57844"/>
        <note>ligand shared between two neighboring subunits</note>
    </ligand>
</feature>
<feature type="binding site" description="in other chain" evidence="2">
    <location>
        <begin position="251"/>
        <end position="252"/>
    </location>
    <ligand>
        <name>ATP</name>
        <dbReference type="ChEBI" id="CHEBI:30616"/>
        <note>ligand shared between two neighboring subunits</note>
    </ligand>
</feature>
<feature type="binding site" evidence="2">
    <location>
        <position position="268"/>
    </location>
    <ligand>
        <name>ATP</name>
        <dbReference type="ChEBI" id="CHEBI:30616"/>
        <note>ligand shared between two neighboring subunits</note>
    </ligand>
</feature>
<feature type="binding site" evidence="2">
    <location>
        <position position="272"/>
    </location>
    <ligand>
        <name>ATP</name>
        <dbReference type="ChEBI" id="CHEBI:30616"/>
        <note>ligand shared between two neighboring subunits</note>
    </ligand>
</feature>
<feature type="binding site" evidence="3">
    <location>
        <position position="276"/>
    </location>
    <ligand>
        <name>ATP</name>
        <dbReference type="ChEBI" id="CHEBI:30616"/>
        <note>ligand shared between two neighboring subunits</note>
    </ligand>
</feature>
<feature type="binding site" description="in other chain" evidence="2">
    <location>
        <position position="276"/>
    </location>
    <ligand>
        <name>L-methionine</name>
        <dbReference type="ChEBI" id="CHEBI:57844"/>
        <note>ligand shared between two neighboring subunits</note>
    </ligand>
</feature>
<sequence length="387" mass="41806">MGFLFTSESVNEGHPDKLADQISDGILDACLAQDPDSKVACETATKTNMVMVFGEITTKAKVDYEAVVRQVCRDVGFISDETGLDGNKCRVLVELHDQSPDIGQGVHGMGTKSDEDIGAGDQGHMFGYATDETPELMPLTHVLATKLGHRLTVVRKDGTCPWVLPDGKTQVTIEYENEGGAMVPKRVHTILISTQHIEGVTNEKIAEDLMNEVIKKVVPEKYLDADTIFHLNPSGRFVIGGPHGDAGLTGRKIIIDTYGGWGAHGGGAFSGKDPTKVDRSGAYISRQAAKSVVAAGLARRCLFQISYAIGVAEPLSVHVDTYGTGKIPDSEILAKVKAAFDFRPGMMGKALDLKRGGNKRYQTTAAYGHFGRDEDLDIFTWEKVVPL</sequence>
<protein>
    <recommendedName>
        <fullName>S-adenosylmethionine synthase</fullName>
        <shortName>AdoMet synthase</shortName>
        <ecNumber evidence="5">2.5.1.6</ecNumber>
    </recommendedName>
    <alternativeName>
        <fullName>Methionine adenosyltransferase</fullName>
        <shortName>MAT</shortName>
    </alternativeName>
</protein>
<name>METK_OSTLU</name>
<dbReference type="EC" id="2.5.1.6" evidence="5"/>
<dbReference type="EMBL" id="CP000594">
    <property type="protein sequence ID" value="ABO99518.1"/>
    <property type="molecule type" value="Genomic_DNA"/>
</dbReference>
<dbReference type="EMBL" id="CP000594">
    <property type="protein sequence ID" value="ABO99553.1"/>
    <property type="molecule type" value="Genomic_DNA"/>
</dbReference>
<dbReference type="RefSeq" id="XP_001421225.1">
    <property type="nucleotide sequence ID" value="XM_001421188.1"/>
</dbReference>
<dbReference type="RefSeq" id="XP_001421260.1">
    <property type="nucleotide sequence ID" value="XM_001421223.1"/>
</dbReference>
<dbReference type="SMR" id="A4S779"/>
<dbReference type="STRING" id="436017.A4S779"/>
<dbReference type="EnsemblPlants" id="ABO99518">
    <property type="protein sequence ID" value="ABO99518"/>
    <property type="gene ID" value="OSTLU_27381"/>
</dbReference>
<dbReference type="EnsemblPlants" id="ABO99553">
    <property type="protein sequence ID" value="ABO99553"/>
    <property type="gene ID" value="OSTLU_47517"/>
</dbReference>
<dbReference type="GeneID" id="5005492"/>
<dbReference type="GeneID" id="5005566"/>
<dbReference type="Gramene" id="ABO99518">
    <property type="protein sequence ID" value="ABO99518"/>
    <property type="gene ID" value="OSTLU_27381"/>
</dbReference>
<dbReference type="Gramene" id="ABO99553">
    <property type="protein sequence ID" value="ABO99553"/>
    <property type="gene ID" value="OSTLU_47517"/>
</dbReference>
<dbReference type="KEGG" id="olu:OSTLU_27381"/>
<dbReference type="KEGG" id="olu:OSTLU_47517"/>
<dbReference type="eggNOG" id="KOG1506">
    <property type="taxonomic scope" value="Eukaryota"/>
</dbReference>
<dbReference type="HOGENOM" id="CLU_041802_0_1_1"/>
<dbReference type="OMA" id="ASYMARY"/>
<dbReference type="OrthoDB" id="5852090at2759"/>
<dbReference type="UniPathway" id="UPA00315">
    <property type="reaction ID" value="UER00080"/>
</dbReference>
<dbReference type="Proteomes" id="UP000001568">
    <property type="component" value="Chromosome 14"/>
</dbReference>
<dbReference type="GO" id="GO:0005737">
    <property type="term" value="C:cytoplasm"/>
    <property type="evidence" value="ECO:0007669"/>
    <property type="project" value="UniProtKB-SubCell"/>
</dbReference>
<dbReference type="GO" id="GO:0005524">
    <property type="term" value="F:ATP binding"/>
    <property type="evidence" value="ECO:0007669"/>
    <property type="project" value="UniProtKB-KW"/>
</dbReference>
<dbReference type="GO" id="GO:0046872">
    <property type="term" value="F:metal ion binding"/>
    <property type="evidence" value="ECO:0007669"/>
    <property type="project" value="UniProtKB-KW"/>
</dbReference>
<dbReference type="GO" id="GO:0004478">
    <property type="term" value="F:methionine adenosyltransferase activity"/>
    <property type="evidence" value="ECO:0007669"/>
    <property type="project" value="UniProtKB-EC"/>
</dbReference>
<dbReference type="GO" id="GO:0006730">
    <property type="term" value="P:one-carbon metabolic process"/>
    <property type="evidence" value="ECO:0007669"/>
    <property type="project" value="UniProtKB-KW"/>
</dbReference>
<dbReference type="GO" id="GO:0006556">
    <property type="term" value="P:S-adenosylmethionine biosynthetic process"/>
    <property type="evidence" value="ECO:0007669"/>
    <property type="project" value="UniProtKB-UniPathway"/>
</dbReference>
<dbReference type="CDD" id="cd18079">
    <property type="entry name" value="S-AdoMet_synt"/>
    <property type="match status" value="1"/>
</dbReference>
<dbReference type="FunFam" id="3.30.300.10:FF:000003">
    <property type="entry name" value="S-adenosylmethionine synthase"/>
    <property type="match status" value="1"/>
</dbReference>
<dbReference type="FunFam" id="3.30.300.10:FF:000004">
    <property type="entry name" value="S-adenosylmethionine synthase"/>
    <property type="match status" value="1"/>
</dbReference>
<dbReference type="FunFam" id="3.30.300.10:FF:000011">
    <property type="entry name" value="S-adenosylmethionine synthase"/>
    <property type="match status" value="1"/>
</dbReference>
<dbReference type="Gene3D" id="3.30.300.10">
    <property type="match status" value="3"/>
</dbReference>
<dbReference type="HAMAP" id="MF_00086">
    <property type="entry name" value="S_AdoMet_synth1"/>
    <property type="match status" value="1"/>
</dbReference>
<dbReference type="InterPro" id="IPR022631">
    <property type="entry name" value="ADOMET_SYNTHASE_CS"/>
</dbReference>
<dbReference type="InterPro" id="IPR022630">
    <property type="entry name" value="S-AdoMet_synt_C"/>
</dbReference>
<dbReference type="InterPro" id="IPR022629">
    <property type="entry name" value="S-AdoMet_synt_central"/>
</dbReference>
<dbReference type="InterPro" id="IPR022628">
    <property type="entry name" value="S-AdoMet_synt_N"/>
</dbReference>
<dbReference type="InterPro" id="IPR002133">
    <property type="entry name" value="S-AdoMet_synthetase"/>
</dbReference>
<dbReference type="InterPro" id="IPR022636">
    <property type="entry name" value="S-AdoMet_synthetase_sfam"/>
</dbReference>
<dbReference type="NCBIfam" id="TIGR01034">
    <property type="entry name" value="metK"/>
    <property type="match status" value="1"/>
</dbReference>
<dbReference type="PANTHER" id="PTHR11964">
    <property type="entry name" value="S-ADENOSYLMETHIONINE SYNTHETASE"/>
    <property type="match status" value="1"/>
</dbReference>
<dbReference type="Pfam" id="PF02773">
    <property type="entry name" value="S-AdoMet_synt_C"/>
    <property type="match status" value="1"/>
</dbReference>
<dbReference type="Pfam" id="PF02772">
    <property type="entry name" value="S-AdoMet_synt_M"/>
    <property type="match status" value="1"/>
</dbReference>
<dbReference type="Pfam" id="PF00438">
    <property type="entry name" value="S-AdoMet_synt_N"/>
    <property type="match status" value="1"/>
</dbReference>
<dbReference type="PIRSF" id="PIRSF000497">
    <property type="entry name" value="MAT"/>
    <property type="match status" value="1"/>
</dbReference>
<dbReference type="SUPFAM" id="SSF55973">
    <property type="entry name" value="S-adenosylmethionine synthetase"/>
    <property type="match status" value="3"/>
</dbReference>
<dbReference type="PROSITE" id="PS00376">
    <property type="entry name" value="ADOMET_SYNTHASE_1"/>
    <property type="match status" value="1"/>
</dbReference>
<dbReference type="PROSITE" id="PS00377">
    <property type="entry name" value="ADOMET_SYNTHASE_2"/>
    <property type="match status" value="1"/>
</dbReference>
<reference key="1">
    <citation type="journal article" date="2007" name="Proc. Natl. Acad. Sci. U.S.A.">
        <title>The tiny eukaryote Ostreococcus provides genomic insights into the paradox of plankton speciation.</title>
        <authorList>
            <person name="Palenik B."/>
            <person name="Grimwood J."/>
            <person name="Aerts A."/>
            <person name="Rouze P."/>
            <person name="Salamov A."/>
            <person name="Putnam N."/>
            <person name="Dupont C."/>
            <person name="Jorgensen R."/>
            <person name="Derelle E."/>
            <person name="Rombauts S."/>
            <person name="Zhou K."/>
            <person name="Otillar R."/>
            <person name="Merchant S.S."/>
            <person name="Podell S."/>
            <person name="Gaasterland T."/>
            <person name="Napoli C."/>
            <person name="Gendler K."/>
            <person name="Manuell A."/>
            <person name="Tai V."/>
            <person name="Vallon O."/>
            <person name="Piganeau G."/>
            <person name="Jancek S."/>
            <person name="Heijde M."/>
            <person name="Jabbari K."/>
            <person name="Bowler C."/>
            <person name="Lohr M."/>
            <person name="Robbens S."/>
            <person name="Werner G."/>
            <person name="Dubchak I."/>
            <person name="Pazour G.J."/>
            <person name="Ren Q."/>
            <person name="Paulsen I."/>
            <person name="Delwiche C."/>
            <person name="Schmutz J."/>
            <person name="Rokhsar D."/>
            <person name="Van de Peer Y."/>
            <person name="Moreau H."/>
            <person name="Grigoriev I.V."/>
        </authorList>
    </citation>
    <scope>NUCLEOTIDE SEQUENCE [LARGE SCALE GENOMIC DNA]</scope>
    <source>
        <strain>CCE9901</strain>
    </source>
</reference>
<accession>A4S779</accession>
<organism>
    <name type="scientific">Ostreococcus lucimarinus (strain CCE9901)</name>
    <dbReference type="NCBI Taxonomy" id="436017"/>
    <lineage>
        <taxon>Eukaryota</taxon>
        <taxon>Viridiplantae</taxon>
        <taxon>Chlorophyta</taxon>
        <taxon>Mamiellophyceae</taxon>
        <taxon>Mamiellales</taxon>
        <taxon>Bathycoccaceae</taxon>
        <taxon>Ostreococcus</taxon>
    </lineage>
</organism>
<proteinExistence type="inferred from homology"/>
<gene>
    <name type="primary">METK-1</name>
    <name type="ORF">OSTLU_27381</name>
</gene>
<gene>
    <name type="primary">METK-2</name>
    <name type="ORF">OSTLU_47517</name>
</gene>
<comment type="function">
    <text evidence="5">Catalyzes the formation of S-adenosylmethionine from methionine and ATP. The reaction comprises two steps that are both catalyzed by the same enzyme: formation of S-adenosylmethionine (AdoMet) and triphosphate, and subsequent hydrolysis of the triphosphate.</text>
</comment>
<comment type="catalytic activity">
    <reaction evidence="5">
        <text>L-methionine + ATP + H2O = S-adenosyl-L-methionine + phosphate + diphosphate</text>
        <dbReference type="Rhea" id="RHEA:21080"/>
        <dbReference type="ChEBI" id="CHEBI:15377"/>
        <dbReference type="ChEBI" id="CHEBI:30616"/>
        <dbReference type="ChEBI" id="CHEBI:33019"/>
        <dbReference type="ChEBI" id="CHEBI:43474"/>
        <dbReference type="ChEBI" id="CHEBI:57844"/>
        <dbReference type="ChEBI" id="CHEBI:59789"/>
        <dbReference type="EC" id="2.5.1.6"/>
    </reaction>
</comment>
<comment type="cofactor">
    <cofactor evidence="5">
        <name>Mn(2+)</name>
        <dbReference type="ChEBI" id="CHEBI:29035"/>
    </cofactor>
    <cofactor evidence="5">
        <name>Mg(2+)</name>
        <dbReference type="ChEBI" id="CHEBI:18420"/>
    </cofactor>
    <cofactor evidence="5">
        <name>Co(2+)</name>
        <dbReference type="ChEBI" id="CHEBI:48828"/>
    </cofactor>
    <text evidence="3 5">Binds 2 divalent ions per subunit. The metal ions interact primarily with the substrate (By similarity). Can utilize magnesium, manganese or cobalt (in vitro) (By similarity).</text>
</comment>
<comment type="cofactor">
    <cofactor evidence="5">
        <name>K(+)</name>
        <dbReference type="ChEBI" id="CHEBI:29103"/>
    </cofactor>
    <text evidence="3">Binds 1 potassium ion per subunit. The potassium ion interacts primarily with the substrate (By similarity).</text>
</comment>
<comment type="pathway">
    <text evidence="5">Amino-acid biosynthesis; S-adenosyl-L-methionine biosynthesis; S-adenosyl-L-methionine from L-methionine: step 1/1.</text>
</comment>
<comment type="subunit">
    <text evidence="1">Homotetramer.</text>
</comment>
<comment type="subcellular location">
    <subcellularLocation>
        <location evidence="1">Cytoplasm</location>
    </subcellularLocation>
</comment>
<comment type="similarity">
    <text evidence="6">Belongs to the AdoMet synthase family.</text>
</comment>
<evidence type="ECO:0000250" key="1"/>
<evidence type="ECO:0000250" key="2">
    <source>
        <dbReference type="UniProtKB" id="P0A817"/>
    </source>
</evidence>
<evidence type="ECO:0000250" key="3">
    <source>
        <dbReference type="UniProtKB" id="P13444"/>
    </source>
</evidence>
<evidence type="ECO:0000250" key="4">
    <source>
        <dbReference type="UniProtKB" id="Q00266"/>
    </source>
</evidence>
<evidence type="ECO:0000250" key="5">
    <source>
        <dbReference type="UniProtKB" id="Q96551"/>
    </source>
</evidence>
<evidence type="ECO:0000305" key="6"/>